<feature type="chain" id="PRO_0000329496" description="Polyribonucleotide nucleotidyltransferase">
    <location>
        <begin position="1"/>
        <end position="718"/>
    </location>
</feature>
<feature type="domain" description="KH" evidence="1">
    <location>
        <begin position="563"/>
        <end position="622"/>
    </location>
</feature>
<feature type="domain" description="S1 motif" evidence="1">
    <location>
        <begin position="632"/>
        <end position="700"/>
    </location>
</feature>
<feature type="binding site" evidence="1">
    <location>
        <position position="496"/>
    </location>
    <ligand>
        <name>Mg(2+)</name>
        <dbReference type="ChEBI" id="CHEBI:18420"/>
    </ligand>
</feature>
<feature type="binding site" evidence="1">
    <location>
        <position position="502"/>
    </location>
    <ligand>
        <name>Mg(2+)</name>
        <dbReference type="ChEBI" id="CHEBI:18420"/>
    </ligand>
</feature>
<protein>
    <recommendedName>
        <fullName evidence="1">Polyribonucleotide nucleotidyltransferase</fullName>
        <ecNumber evidence="1">2.7.7.8</ecNumber>
    </recommendedName>
    <alternativeName>
        <fullName evidence="1">Polynucleotide phosphorylase</fullName>
        <shortName evidence="1">PNPase</shortName>
    </alternativeName>
</protein>
<comment type="function">
    <text evidence="1">Involved in mRNA degradation. Catalyzes the phosphorolysis of single-stranded polyribonucleotides processively in the 3'- to 5'-direction.</text>
</comment>
<comment type="catalytic activity">
    <reaction evidence="1">
        <text>RNA(n+1) + phosphate = RNA(n) + a ribonucleoside 5'-diphosphate</text>
        <dbReference type="Rhea" id="RHEA:22096"/>
        <dbReference type="Rhea" id="RHEA-COMP:14527"/>
        <dbReference type="Rhea" id="RHEA-COMP:17342"/>
        <dbReference type="ChEBI" id="CHEBI:43474"/>
        <dbReference type="ChEBI" id="CHEBI:57930"/>
        <dbReference type="ChEBI" id="CHEBI:140395"/>
        <dbReference type="EC" id="2.7.7.8"/>
    </reaction>
</comment>
<comment type="cofactor">
    <cofactor evidence="1">
        <name>Mg(2+)</name>
        <dbReference type="ChEBI" id="CHEBI:18420"/>
    </cofactor>
</comment>
<comment type="subunit">
    <text evidence="2">May form homodimers or higher order multimers. Interacts with RNase E (rne).</text>
</comment>
<comment type="subcellular location">
    <subcellularLocation>
        <location evidence="1">Cytoplasm</location>
    </subcellularLocation>
</comment>
<comment type="induction">
    <text evidence="3">Repressed by radiation.</text>
</comment>
<comment type="mass spectrometry" mass="78000.0" error="1.0" method="MALDI" evidence="3"/>
<comment type="similarity">
    <text evidence="1">Belongs to the polyribonucleotide nucleotidyltransferase family.</text>
</comment>
<reference key="1">
    <citation type="journal article" date="2001" name="DNA Res.">
        <title>Complete genomic sequence of the filamentous nitrogen-fixing cyanobacterium Anabaena sp. strain PCC 7120.</title>
        <authorList>
            <person name="Kaneko T."/>
            <person name="Nakamura Y."/>
            <person name="Wolk C.P."/>
            <person name="Kuritz T."/>
            <person name="Sasamoto S."/>
            <person name="Watanabe A."/>
            <person name="Iriguchi M."/>
            <person name="Ishikawa A."/>
            <person name="Kawashima K."/>
            <person name="Kimura T."/>
            <person name="Kishida Y."/>
            <person name="Kohara M."/>
            <person name="Matsumoto M."/>
            <person name="Matsuno A."/>
            <person name="Muraki A."/>
            <person name="Nakazaki N."/>
            <person name="Shimpo S."/>
            <person name="Sugimoto M."/>
            <person name="Takazawa M."/>
            <person name="Yamada M."/>
            <person name="Yasuda M."/>
            <person name="Tabata S."/>
        </authorList>
    </citation>
    <scope>NUCLEOTIDE SEQUENCE [LARGE SCALE GENOMIC DNA]</scope>
    <source>
        <strain>PCC 7120 / SAG 25.82 / UTEX 2576</strain>
    </source>
</reference>
<reference key="2">
    <citation type="submission" date="2008-12" db="UniProtKB">
        <authorList>
            <person name="Singh H."/>
            <person name="Rajaram H."/>
            <person name="Apte S.K."/>
        </authorList>
    </citation>
    <scope>PROTEIN SEQUENCE OF 50-64; 141-150 AND 255-267</scope>
    <scope>INDUCTION</scope>
    <scope>MASS SPECTROMETRY</scope>
</reference>
<reference key="3">
    <citation type="journal article" date="2014" name="RNA">
        <title>RNase E forms a complex with polynucleotide phosphorylase in cyanobacteria via a cyanobacterial-specific nonapeptide in the noncatalytic region.</title>
        <authorList>
            <person name="Zhang J.Y."/>
            <person name="Deng X.M."/>
            <person name="Li F.P."/>
            <person name="Wang L."/>
            <person name="Huang Q.Y."/>
            <person name="Zhang C.C."/>
            <person name="Chen W.L."/>
        </authorList>
    </citation>
    <scope>SUBUNIT</scope>
    <source>
        <strain>PCC 7120 / SAG 25.82 / UTEX 2576</strain>
    </source>
</reference>
<sequence length="718" mass="77790">MAEFEKSISFDGRDIRLKVGLLAPQAGGSVLIESGDTAVLVTATRSPGREGIDFLPLTVDYEERLYAAGRIPGGIMRREGRPPEKTILTSRLIDRPLRPLFPSWLRDDLQVVALTMSMDEQVPPDVLAVTGASIATLIAKIPFNGPMAAVRVGLVGDDFIINPTYAEIEAGDLDLVVAGSPHGVIMVEAGANQLPERDIIEAIDFGYEAVRDLIKAQLDLVAELGLEIVQEAPPEVDQTLENYIRDRASDEIKKILAQFELTKPERDAALDVVKDNIATAIAELPEEDPIRLAATANSKALGNTFKDITKYFMRRQIVEDNVRVDGRKLDQVRPVSSQVGVLPKRVHGSGLFNRGLTQVLSACTLGTPGDAQNLNDDLQTDQSKRYLHHYNFPPFSVGETKPLRAPGRREIGHGALAERAILPVLPPKEQFPYVIRVVSEVLSSNGSTSMGSVCGSTLALMDAGVPILKPVSGAAMGLIKEGDEVRVLTDIQGIEDFLGDMDFKVAGTDAGITALQMDMKISGLSLEVIAQAIHQAKDARLHILDKMLQTIDQPRTETSPYAPRLLTIKIDPDMIGLVIGPGGKTIKGITEETGAKIDIEDDGTVTISAVDENKAKRARNIVQGMTRKLNEGDVYAGRVTRIIPIGAFVEFLPGKEGMIHISQLADYRVGKVEDEVAVGDEVIVKVREIDNKGRINLTRLGIHPDQAAAAREAAAVNR</sequence>
<proteinExistence type="evidence at protein level"/>
<accession>Q8YP11</accession>
<keyword id="KW-0963">Cytoplasm</keyword>
<keyword id="KW-0903">Direct protein sequencing</keyword>
<keyword id="KW-0460">Magnesium</keyword>
<keyword id="KW-0479">Metal-binding</keyword>
<keyword id="KW-0548">Nucleotidyltransferase</keyword>
<keyword id="KW-1185">Reference proteome</keyword>
<keyword id="KW-0694">RNA-binding</keyword>
<keyword id="KW-0808">Transferase</keyword>
<dbReference type="EC" id="2.7.7.8" evidence="1"/>
<dbReference type="EMBL" id="BA000019">
    <property type="protein sequence ID" value="BAB76095.1"/>
    <property type="molecule type" value="Genomic_DNA"/>
</dbReference>
<dbReference type="PIR" id="AD2355">
    <property type="entry name" value="AD2355"/>
</dbReference>
<dbReference type="RefSeq" id="WP_010998533.1">
    <property type="nucleotide sequence ID" value="NZ_RSCN01000051.1"/>
</dbReference>
<dbReference type="SMR" id="Q8YP11"/>
<dbReference type="STRING" id="103690.gene:10496445"/>
<dbReference type="KEGG" id="ana:all4396"/>
<dbReference type="eggNOG" id="COG1185">
    <property type="taxonomic scope" value="Bacteria"/>
</dbReference>
<dbReference type="OrthoDB" id="9804305at2"/>
<dbReference type="BRENDA" id="2.7.7.8">
    <property type="organism ID" value="4371"/>
</dbReference>
<dbReference type="Proteomes" id="UP000002483">
    <property type="component" value="Chromosome"/>
</dbReference>
<dbReference type="GO" id="GO:0005829">
    <property type="term" value="C:cytosol"/>
    <property type="evidence" value="ECO:0007669"/>
    <property type="project" value="TreeGrafter"/>
</dbReference>
<dbReference type="GO" id="GO:0000175">
    <property type="term" value="F:3'-5'-RNA exonuclease activity"/>
    <property type="evidence" value="ECO:0007669"/>
    <property type="project" value="TreeGrafter"/>
</dbReference>
<dbReference type="GO" id="GO:0000287">
    <property type="term" value="F:magnesium ion binding"/>
    <property type="evidence" value="ECO:0007669"/>
    <property type="project" value="UniProtKB-UniRule"/>
</dbReference>
<dbReference type="GO" id="GO:0004654">
    <property type="term" value="F:polyribonucleotide nucleotidyltransferase activity"/>
    <property type="evidence" value="ECO:0007669"/>
    <property type="project" value="UniProtKB-UniRule"/>
</dbReference>
<dbReference type="GO" id="GO:0003723">
    <property type="term" value="F:RNA binding"/>
    <property type="evidence" value="ECO:0007669"/>
    <property type="project" value="UniProtKB-UniRule"/>
</dbReference>
<dbReference type="GO" id="GO:0006402">
    <property type="term" value="P:mRNA catabolic process"/>
    <property type="evidence" value="ECO:0007669"/>
    <property type="project" value="UniProtKB-UniRule"/>
</dbReference>
<dbReference type="GO" id="GO:0006396">
    <property type="term" value="P:RNA processing"/>
    <property type="evidence" value="ECO:0007669"/>
    <property type="project" value="InterPro"/>
</dbReference>
<dbReference type="CDD" id="cd02393">
    <property type="entry name" value="KH-I_PNPase"/>
    <property type="match status" value="1"/>
</dbReference>
<dbReference type="CDD" id="cd11363">
    <property type="entry name" value="RNase_PH_PNPase_1"/>
    <property type="match status" value="1"/>
</dbReference>
<dbReference type="CDD" id="cd11364">
    <property type="entry name" value="RNase_PH_PNPase_2"/>
    <property type="match status" value="1"/>
</dbReference>
<dbReference type="CDD" id="cd04472">
    <property type="entry name" value="S1_PNPase"/>
    <property type="match status" value="1"/>
</dbReference>
<dbReference type="FunFam" id="3.30.1370.10:FF:000001">
    <property type="entry name" value="Polyribonucleotide nucleotidyltransferase"/>
    <property type="match status" value="1"/>
</dbReference>
<dbReference type="FunFam" id="3.30.230.70:FF:000001">
    <property type="entry name" value="Polyribonucleotide nucleotidyltransferase"/>
    <property type="match status" value="1"/>
</dbReference>
<dbReference type="FunFam" id="3.30.230.70:FF:000002">
    <property type="entry name" value="Polyribonucleotide nucleotidyltransferase"/>
    <property type="match status" value="1"/>
</dbReference>
<dbReference type="Gene3D" id="3.30.230.70">
    <property type="entry name" value="GHMP Kinase, N-terminal domain"/>
    <property type="match status" value="2"/>
</dbReference>
<dbReference type="Gene3D" id="3.30.1370.10">
    <property type="entry name" value="K Homology domain, type 1"/>
    <property type="match status" value="1"/>
</dbReference>
<dbReference type="Gene3D" id="2.40.50.140">
    <property type="entry name" value="Nucleic acid-binding proteins"/>
    <property type="match status" value="1"/>
</dbReference>
<dbReference type="HAMAP" id="MF_01595">
    <property type="entry name" value="PNPase"/>
    <property type="match status" value="1"/>
</dbReference>
<dbReference type="InterPro" id="IPR001247">
    <property type="entry name" value="ExoRNase_PH_dom1"/>
</dbReference>
<dbReference type="InterPro" id="IPR015847">
    <property type="entry name" value="ExoRNase_PH_dom2"/>
</dbReference>
<dbReference type="InterPro" id="IPR036345">
    <property type="entry name" value="ExoRNase_PH_dom2_sf"/>
</dbReference>
<dbReference type="InterPro" id="IPR004087">
    <property type="entry name" value="KH_dom"/>
</dbReference>
<dbReference type="InterPro" id="IPR004088">
    <property type="entry name" value="KH_dom_type_1"/>
</dbReference>
<dbReference type="InterPro" id="IPR036612">
    <property type="entry name" value="KH_dom_type_1_sf"/>
</dbReference>
<dbReference type="InterPro" id="IPR012340">
    <property type="entry name" value="NA-bd_OB-fold"/>
</dbReference>
<dbReference type="InterPro" id="IPR012162">
    <property type="entry name" value="PNPase"/>
</dbReference>
<dbReference type="InterPro" id="IPR027408">
    <property type="entry name" value="PNPase/RNase_PH_dom_sf"/>
</dbReference>
<dbReference type="InterPro" id="IPR015848">
    <property type="entry name" value="PNPase_PH_RNA-bd_bac/org-type"/>
</dbReference>
<dbReference type="InterPro" id="IPR036456">
    <property type="entry name" value="PNPase_PH_RNA-bd_sf"/>
</dbReference>
<dbReference type="InterPro" id="IPR020568">
    <property type="entry name" value="Ribosomal_Su5_D2-typ_SF"/>
</dbReference>
<dbReference type="InterPro" id="IPR003029">
    <property type="entry name" value="S1_domain"/>
</dbReference>
<dbReference type="NCBIfam" id="TIGR03591">
    <property type="entry name" value="polynuc_phos"/>
    <property type="match status" value="1"/>
</dbReference>
<dbReference type="NCBIfam" id="NF008805">
    <property type="entry name" value="PRK11824.1"/>
    <property type="match status" value="1"/>
</dbReference>
<dbReference type="PANTHER" id="PTHR11252">
    <property type="entry name" value="POLYRIBONUCLEOTIDE NUCLEOTIDYLTRANSFERASE"/>
    <property type="match status" value="1"/>
</dbReference>
<dbReference type="PANTHER" id="PTHR11252:SF0">
    <property type="entry name" value="POLYRIBONUCLEOTIDE NUCLEOTIDYLTRANSFERASE 1, MITOCHONDRIAL"/>
    <property type="match status" value="1"/>
</dbReference>
<dbReference type="Pfam" id="PF00013">
    <property type="entry name" value="KH_1"/>
    <property type="match status" value="1"/>
</dbReference>
<dbReference type="Pfam" id="PF03726">
    <property type="entry name" value="PNPase"/>
    <property type="match status" value="1"/>
</dbReference>
<dbReference type="Pfam" id="PF01138">
    <property type="entry name" value="RNase_PH"/>
    <property type="match status" value="2"/>
</dbReference>
<dbReference type="Pfam" id="PF03725">
    <property type="entry name" value="RNase_PH_C"/>
    <property type="match status" value="2"/>
</dbReference>
<dbReference type="Pfam" id="PF00575">
    <property type="entry name" value="S1"/>
    <property type="match status" value="1"/>
</dbReference>
<dbReference type="PIRSF" id="PIRSF005499">
    <property type="entry name" value="PNPase"/>
    <property type="match status" value="1"/>
</dbReference>
<dbReference type="SMART" id="SM00322">
    <property type="entry name" value="KH"/>
    <property type="match status" value="1"/>
</dbReference>
<dbReference type="SMART" id="SM00316">
    <property type="entry name" value="S1"/>
    <property type="match status" value="1"/>
</dbReference>
<dbReference type="SUPFAM" id="SSF54791">
    <property type="entry name" value="Eukaryotic type KH-domain (KH-domain type I)"/>
    <property type="match status" value="1"/>
</dbReference>
<dbReference type="SUPFAM" id="SSF50249">
    <property type="entry name" value="Nucleic acid-binding proteins"/>
    <property type="match status" value="1"/>
</dbReference>
<dbReference type="SUPFAM" id="SSF46915">
    <property type="entry name" value="Polynucleotide phosphorylase/guanosine pentaphosphate synthase (PNPase/GPSI), domain 3"/>
    <property type="match status" value="1"/>
</dbReference>
<dbReference type="SUPFAM" id="SSF55666">
    <property type="entry name" value="Ribonuclease PH domain 2-like"/>
    <property type="match status" value="2"/>
</dbReference>
<dbReference type="SUPFAM" id="SSF54211">
    <property type="entry name" value="Ribosomal protein S5 domain 2-like"/>
    <property type="match status" value="2"/>
</dbReference>
<dbReference type="PROSITE" id="PS50084">
    <property type="entry name" value="KH_TYPE_1"/>
    <property type="match status" value="1"/>
</dbReference>
<dbReference type="PROSITE" id="PS50126">
    <property type="entry name" value="S1"/>
    <property type="match status" value="1"/>
</dbReference>
<name>PNP_NOSS1</name>
<organism>
    <name type="scientific">Nostoc sp. (strain PCC 7120 / SAG 25.82 / UTEX 2576)</name>
    <dbReference type="NCBI Taxonomy" id="103690"/>
    <lineage>
        <taxon>Bacteria</taxon>
        <taxon>Bacillati</taxon>
        <taxon>Cyanobacteriota</taxon>
        <taxon>Cyanophyceae</taxon>
        <taxon>Nostocales</taxon>
        <taxon>Nostocaceae</taxon>
        <taxon>Nostoc</taxon>
    </lineage>
</organism>
<evidence type="ECO:0000255" key="1">
    <source>
        <dbReference type="HAMAP-Rule" id="MF_01595"/>
    </source>
</evidence>
<evidence type="ECO:0000269" key="2">
    <source>
    </source>
</evidence>
<evidence type="ECO:0000269" key="3">
    <source ref="2"/>
</evidence>
<gene>
    <name evidence="1" type="primary">pnp</name>
    <name type="ordered locus">all4396</name>
</gene>